<accession>Q27YE1</accession>
<name>L_IPPYV</name>
<organism>
    <name type="scientific">Ippy mammarenavirus (isolate Rat/Central African Republic/Dak An B 188 d/1970)</name>
    <name type="common">IPPYV</name>
    <dbReference type="NCBI Taxonomy" id="3052308"/>
    <lineage>
        <taxon>Viruses</taxon>
        <taxon>Riboviria</taxon>
        <taxon>Orthornavirae</taxon>
        <taxon>Negarnaviricota</taxon>
        <taxon>Polyploviricotina</taxon>
        <taxon>Ellioviricetes</taxon>
        <taxon>Bunyavirales</taxon>
        <taxon>Arenaviridae</taxon>
        <taxon>Mammarenavirus</taxon>
    </lineage>
</organism>
<keyword id="KW-1157">Cap snatching</keyword>
<keyword id="KW-1035">Host cytoplasm</keyword>
<keyword id="KW-0378">Hydrolase</keyword>
<keyword id="KW-0460">Magnesium</keyword>
<keyword id="KW-0464">Manganese</keyword>
<keyword id="KW-0479">Metal-binding</keyword>
<keyword id="KW-0547">Nucleotide-binding</keyword>
<keyword id="KW-0548">Nucleotidyltransferase</keyword>
<keyword id="KW-0696">RNA-directed RNA polymerase</keyword>
<keyword id="KW-0808">Transferase</keyword>
<keyword id="KW-0693">Viral RNA replication</keyword>
<keyword id="KW-0946">Virion</keyword>
<dbReference type="EC" id="2.7.7.48" evidence="1"/>
<dbReference type="EC" id="3.1.-.-" evidence="1"/>
<dbReference type="EMBL" id="DQ328878">
    <property type="protein sequence ID" value="ABC71143.1"/>
    <property type="molecule type" value="Genomic_RNA"/>
</dbReference>
<dbReference type="RefSeq" id="YP_516233.1">
    <property type="nucleotide sequence ID" value="NC_007906.1"/>
</dbReference>
<dbReference type="SMR" id="Q27YE1"/>
<dbReference type="GeneID" id="3953120"/>
<dbReference type="KEGG" id="vg:3953120"/>
<dbReference type="Proteomes" id="UP000009261">
    <property type="component" value="Genome"/>
</dbReference>
<dbReference type="GO" id="GO:0030430">
    <property type="term" value="C:host cell cytoplasm"/>
    <property type="evidence" value="ECO:0007669"/>
    <property type="project" value="UniProtKB-SubCell"/>
</dbReference>
<dbReference type="GO" id="GO:0044423">
    <property type="term" value="C:virion component"/>
    <property type="evidence" value="ECO:0007669"/>
    <property type="project" value="UniProtKB-KW"/>
</dbReference>
<dbReference type="GO" id="GO:0016787">
    <property type="term" value="F:hydrolase activity"/>
    <property type="evidence" value="ECO:0007669"/>
    <property type="project" value="UniProtKB-KW"/>
</dbReference>
<dbReference type="GO" id="GO:0046872">
    <property type="term" value="F:metal ion binding"/>
    <property type="evidence" value="ECO:0007669"/>
    <property type="project" value="UniProtKB-KW"/>
</dbReference>
<dbReference type="GO" id="GO:0000166">
    <property type="term" value="F:nucleotide binding"/>
    <property type="evidence" value="ECO:0007669"/>
    <property type="project" value="UniProtKB-UniRule"/>
</dbReference>
<dbReference type="GO" id="GO:0003968">
    <property type="term" value="F:RNA-directed RNA polymerase activity"/>
    <property type="evidence" value="ECO:0007669"/>
    <property type="project" value="UniProtKB-UniRule"/>
</dbReference>
<dbReference type="GO" id="GO:0075526">
    <property type="term" value="P:cap snatching"/>
    <property type="evidence" value="ECO:0007669"/>
    <property type="project" value="UniProtKB-UniRule"/>
</dbReference>
<dbReference type="GO" id="GO:0039689">
    <property type="term" value="P:negative stranded viral RNA replication"/>
    <property type="evidence" value="ECO:0000250"/>
    <property type="project" value="UniProtKB"/>
</dbReference>
<dbReference type="GO" id="GO:0039696">
    <property type="term" value="P:RNA-templated viral transcription"/>
    <property type="evidence" value="ECO:0000250"/>
    <property type="project" value="UniProtKB"/>
</dbReference>
<dbReference type="Gene3D" id="3.30.70.2640">
    <property type="entry name" value="Arenavirus RNA polymerase"/>
    <property type="match status" value="1"/>
</dbReference>
<dbReference type="Gene3D" id="1.20.1440.300">
    <property type="entry name" value="RNA-directed RNA polymerase L, helical domain"/>
    <property type="match status" value="1"/>
</dbReference>
<dbReference type="HAMAP" id="MF_04086">
    <property type="entry name" value="ARENA_L"/>
    <property type="match status" value="1"/>
</dbReference>
<dbReference type="InterPro" id="IPR026382">
    <property type="entry name" value="CapSnatch_arenavir"/>
</dbReference>
<dbReference type="InterPro" id="IPR048006">
    <property type="entry name" value="CapSnatch_bunyavir"/>
</dbReference>
<dbReference type="InterPro" id="IPR007099">
    <property type="entry name" value="RNA-dir_pol_NSvirus"/>
</dbReference>
<dbReference type="InterPro" id="IPR010453">
    <property type="entry name" value="RNA_pol_arenavir"/>
</dbReference>
<dbReference type="NCBIfam" id="TIGR04202">
    <property type="entry name" value="capSnatchArena"/>
    <property type="match status" value="1"/>
</dbReference>
<dbReference type="Pfam" id="PF06317">
    <property type="entry name" value="Arena_RNA_pol"/>
    <property type="match status" value="1"/>
</dbReference>
<dbReference type="Pfam" id="PF17296">
    <property type="entry name" value="ArenaCapSnatch"/>
    <property type="match status" value="1"/>
</dbReference>
<dbReference type="PIRSF" id="PIRSF000836">
    <property type="entry name" value="L_ArenaV"/>
    <property type="match status" value="1"/>
</dbReference>
<dbReference type="PROSITE" id="PS50525">
    <property type="entry name" value="RDRP_SSRNA_NEG_SEG"/>
    <property type="match status" value="1"/>
</dbReference>
<organismHost>
    <name type="scientific">Praomys</name>
    <name type="common">African soft-furred rats</name>
    <dbReference type="NCBI Taxonomy" id="10111"/>
</organismHost>
<feature type="chain" id="PRO_0000361637" description="RNA-directed RNA polymerase L">
    <location>
        <begin position="1"/>
        <end position="2208"/>
    </location>
</feature>
<feature type="domain" description="RdRp catalytic" evidence="1">
    <location>
        <begin position="1160"/>
        <end position="1356"/>
    </location>
</feature>
<feature type="region of interest" description="Endonuclease" evidence="1">
    <location>
        <begin position="26"/>
        <end position="291"/>
    </location>
</feature>
<feature type="active site" evidence="1">
    <location>
        <position position="115"/>
    </location>
</feature>
<feature type="binding site" evidence="1">
    <location>
        <position position="51"/>
    </location>
    <ligand>
        <name>Mn(2+)</name>
        <dbReference type="ChEBI" id="CHEBI:29035"/>
        <label>1</label>
    </ligand>
</feature>
<feature type="binding site" evidence="1">
    <location>
        <position position="89"/>
    </location>
    <ligand>
        <name>Mn(2+)</name>
        <dbReference type="ChEBI" id="CHEBI:29035"/>
        <label>1</label>
    </ligand>
</feature>
<feature type="binding site" evidence="1">
    <location>
        <position position="89"/>
    </location>
    <ligand>
        <name>Mn(2+)</name>
        <dbReference type="ChEBI" id="CHEBI:29035"/>
        <label>2</label>
    </ligand>
</feature>
<feature type="binding site" evidence="1">
    <location>
        <position position="102"/>
    </location>
    <ligand>
        <name>Mn(2+)</name>
        <dbReference type="ChEBI" id="CHEBI:29035"/>
        <label>1</label>
    </ligand>
</feature>
<feature type="binding site" evidence="1">
    <location>
        <position position="1318"/>
    </location>
    <ligand>
        <name>Mg(2+)</name>
        <dbReference type="ChEBI" id="CHEBI:18420"/>
        <note>catalytic; for RdRp activity</note>
    </ligand>
</feature>
<reference key="1">
    <citation type="journal article" date="2006" name="Virology">
        <title>Phylogeny and evolution of old world arenaviruses.</title>
        <authorList>
            <person name="Emonet S."/>
            <person name="Lemasson J.J."/>
            <person name="Gonzalez J.P."/>
            <person name="de Lamballerie X."/>
            <person name="Charrel R.N."/>
        </authorList>
    </citation>
    <scope>NUCLEOTIDE SEQUENCE [GENOMIC RNA]</scope>
</reference>
<reference key="2">
    <citation type="journal article" date="2008" name="Curr. Opin. Microbiol.">
        <title>Phylogeny of the genus Arenavirus.</title>
        <authorList>
            <person name="Charrel R.N."/>
            <person name="de Lamballerie X."/>
            <person name="Emonet S."/>
        </authorList>
    </citation>
    <scope>NUCLEOTIDE SEQUENCE [GENOMIC RNA]</scope>
</reference>
<reference key="3">
    <citation type="journal article" date="2017" name="Crit. Rev. Microbiol.">
        <title>Bunyaviridae RdRps: structure, motifs, and RNA synthesis machinery.</title>
        <authorList>
            <person name="Amroun A."/>
            <person name="Priet S."/>
            <person name="de Lamballerie X."/>
            <person name="Querat G."/>
        </authorList>
    </citation>
    <scope>REVIEW</scope>
</reference>
<reference key="4">
    <citation type="journal article" date="2020" name="Trends Microbiol.">
        <title>The Cap-Snatching Mechanism of Bunyaviruses.</title>
        <authorList>
            <person name="Olschewski S."/>
            <person name="Cusack S."/>
            <person name="Rosenthal M."/>
        </authorList>
    </citation>
    <scope>REVIEW</scope>
</reference>
<sequence>MEESLRETKLLISRYLRQDERIARQKLAFLGQSEPRSLLIEGLKLLSLCIEIDSCDTNCCTHNTEGQSVENFLFQNHILCPSLPLVVPDGMKLNGNILIILECFVRSNPTNFQQKYQEDSVKLDSLKGDLERAGISLIPIIDGRTSYYNSLMEEWVCDQFRHNLFKLLEFEQENNALFEESEYLRLCESLNVSGGRASGAQGLHSLLDCRGEHYNEILKACHIGIDPSIGGVELKGQIENLYQVFRQKLKKGVIKHQFRKVDQKSLLKEYCEMYKGIGICGVEETTVDALAAELPNISPILRYIHLRIDSESNAEVNEISNLPTGLRSAFNKVKSLKVLNTRRKLLLLIDTIILMSHCYVRELFPTLCERDWLGSSFFSVGDRLVSVGAIQHDLSKWLKRRLKANGGVGQKSTELHKMINTMIQKSSKALGDVGLSFESYGVSFDFLNKVGLEEIMRFKIVGVTPTISYIKTNQQPPIPLREFSAEDDSDLKMLSSLSLSLVNSMKTSSTVKTRQNAMGRERYRVVQCKECYYQELGNEYRDLVLLYQKTGEGSKCYSVNSKRVGEICSFYADPKRYFCPIFSENVITKVIDTMMTWLMGIVELEDSLRDIKKLTKMILLVILCQPSKRSQKLLQNLRYFIMAFVSDYHHVELFDKLREELITDAEFFLFKLLGKILTILLNDEVSTMLNNRFKFILNISYFCHFITKETPDRLTDQIKCFEKYLEPKIQFGSLTVNPKETPTDEEKDDILHGVNMFLSKKTCDEVDDPPSKKPGVSKKVFSLMLSAFNSGLLFKESELKKGMKDPLEDSGSATALDLASNKSVVINKYTKDGRVLDYNYDKLVSVAVCQLSEIFSRKGKYLLNKEDYDYKIQEVLSSLVIGSSKSEQPEEILDVDSDYMDQLKASVERVLDQYKPNRGVRSQNNDKSVNDLKIIVEDELSRRLILGELSYHLVEDFDKGLLSENFYKEVCEKAFNNKDFRTKYFYDSEAGLCPIEKMTQALATRTYMSGEYFHCFKSLLLQMDANKLSGKYSHYKSQNLNFRFDHGRLMDDSRISERESNSEALSKALSLVNCLTSALKNLCFYSQESPSSYTETGPDTGRMKFSLSYKEQVGGNRELYIGDLRTKMFTRFVEDYFESYTKQLEGSCLNNEKEFEKAILGMKLGVSLAHASYSLDHSKWGPMMCPFLFLMLYRNLSPKLKGTEVELKGCDNISTILSWHIHKLVEVPFNVVTAMMRSYIKRKLGIMKDTSQTITESLFFSEFERGVIPSHFSSVLDMGQGILHNTSDFYGLISERFINYALRLVSGNPIEAYTSSDDQISLFSHKFTELMDTDPEEFLIYLEFHNYLSSLLNKFISPKSVVGRFVAEFKSRFYVWGDEVPLLSKFVAASLHNIKCKEPHQLAETVDTIIDQAVANGVPVSVCNEVQKRTLRLLEFSKYPIDPFLLHSDSDVKDWVDGNRGYRIMRVIEQTLPEGTASVRSLLRILYNKLKSNELHEEFASAYLSQNRSETLVGLAELMGVKPPSTEDLMICWLNLTACHPLRMVLRQKVIYPSALNLEEEKVPTLIRTLQNKLSSGFTRGAQKLLSEAVNKSAFQSSIASGFVGLCKTLGSKCVRDPERESHYIKSIIQYLQTHCNVKPLNKGHLNLWVYESKTDDTQSASVKPWQIELLRPLLWDYLCIALSTSLEIGPWVLGEPVFKVKSDFWKPRPCDYFPLRPAHNRILEDRIGMNHIIHAVRRLYPEMFEKHLLPYMSDLAAMKLKWSPRIKFLDLCVTLDVNCEALSLISHVVKWKREEHYIVLSDDLLVSHDRKHTTLMDETVVSTSDVADNFLKQIYFESFVKPFVATSRTLGSFSWFPHRSSLPQGEGIERLGPFSTFIEKVVFKGIERPMYRYDLFMGYSWLDYEIELAHLNQSQLIASGLTEESCFEDVDQFWHYLSTLKVGSVKLSKTVRLTQKTQGKLQGQKFSVHLNFTGFITNSCTFVPKQLEVLYSGPVDEHFVIDCWSLLKSDREFKAGASEWFVHSDVVDAYISTASPSSEAYPLDVWLEPDLLELSVSDISKVGPEVNIVPLVVEDGHLLELKEKVAIINPVILDQDIEVFINELKEDHWDLLVCKFADILKHRQCCNLYLINVDILTIALRILNDKAEEFISKSMQEIDQWFDFKGYSLCFSKSRRQVMRHSSTGTMRLKGRLCQPAFYVEVVEEID</sequence>
<comment type="function">
    <text evidence="1">RNA-dependent RNA polymerase, which is responsible for the replication and transcription of the viral RNA genome using antigenomic RNA as an intermediate. During transcription, synthesizes subgenomic RNAs and assures their capping by a cap-snatching mechanism, which involves the endonuclease activity cleaving the host capped pre-mRNAs. These short capped RNAs are then used as primers for viral transcription. The 3'-end of subgenomic mRNAs molecules are heterogeneous and not polyadenylated. The replicase function is to direct synthesis of antigenomic and genomic RNA which are encapsidated and non capped. As a consequence of the use of the same enzyme for both transcription and replication, these mechanisms need to be well coordinated. These processes may be regulated by proteins N and Z in a dose-dependent manner. Z protein inhibits the viral polymerase L und thus the viral transcription and RNA synthesis.</text>
</comment>
<comment type="catalytic activity">
    <reaction evidence="1">
        <text>RNA(n) + a ribonucleoside 5'-triphosphate = RNA(n+1) + diphosphate</text>
        <dbReference type="Rhea" id="RHEA:21248"/>
        <dbReference type="Rhea" id="RHEA-COMP:14527"/>
        <dbReference type="Rhea" id="RHEA-COMP:17342"/>
        <dbReference type="ChEBI" id="CHEBI:33019"/>
        <dbReference type="ChEBI" id="CHEBI:61557"/>
        <dbReference type="ChEBI" id="CHEBI:140395"/>
        <dbReference type="EC" id="2.7.7.48"/>
    </reaction>
</comment>
<comment type="cofactor">
    <cofactor evidence="1">
        <name>Mn(2+)</name>
        <dbReference type="ChEBI" id="CHEBI:29035"/>
    </cofactor>
    <text evidence="1">For endonuclease activity. Binds 2 Mn(2+) ions in the active site. The divalent metal ions are crucial for catalytic activity.</text>
</comment>
<comment type="cofactor">
    <cofactor evidence="1">
        <name>Mg(2+)</name>
        <dbReference type="ChEBI" id="CHEBI:18420"/>
    </cofactor>
    <cofactor evidence="1">
        <name>Mn(2+)</name>
        <dbReference type="ChEBI" id="CHEBI:29035"/>
    </cofactor>
    <text evidence="1">For polymerase activity.</text>
</comment>
<comment type="subunit">
    <text evidence="1">Homomultimer; the oligomeric structure is essential for the polymerase activity. Interacts with nucleoprotein N. Interacts with protein Z; this interaction inhibits viral transcription and replication, Z partially blocks the product exit tunnel for the releasing nascent RNA product.</text>
</comment>
<comment type="subcellular location">
    <subcellularLocation>
        <location evidence="1">Virion</location>
    </subcellularLocation>
    <subcellularLocation>
        <location evidence="1">Host cytoplasm</location>
    </subcellularLocation>
</comment>
<comment type="domain">
    <text evidence="1">The N-terminus contains the endonuclease activity (endoN). The central region contains the RdRp activity.</text>
</comment>
<comment type="miscellaneous">
    <text evidence="1">Classified as His(-) endonuclease since it does not have a histidine upstream of the active site that coordinates the first cation. His(-) endonucleases display very low activity in vitro, although they are clearly active in vivo.</text>
</comment>
<comment type="similarity">
    <text evidence="1">Belongs to the Bunyavirales RNA polymerase family.</text>
</comment>
<gene>
    <name evidence="1" type="primary">L</name>
</gene>
<proteinExistence type="inferred from homology"/>
<protein>
    <recommendedName>
        <fullName evidence="1">RNA-directed RNA polymerase L</fullName>
        <shortName evidence="1">Protein L</shortName>
        <ecNumber evidence="1">2.7.7.48</ecNumber>
    </recommendedName>
    <alternativeName>
        <fullName evidence="1">Large structural protein</fullName>
    </alternativeName>
    <alternativeName>
        <fullName evidence="1">Replicase</fullName>
    </alternativeName>
    <alternativeName>
        <fullName evidence="1">Transcriptase</fullName>
    </alternativeName>
    <domain>
        <recommendedName>
            <fullName evidence="1">cap-snatching endonuclease</fullName>
            <ecNumber evidence="1">3.1.-.-</ecNumber>
        </recommendedName>
    </domain>
</protein>
<evidence type="ECO:0000255" key="1">
    <source>
        <dbReference type="HAMAP-Rule" id="MF_04086"/>
    </source>
</evidence>